<protein>
    <recommendedName>
        <fullName>Testin</fullName>
    </recommendedName>
</protein>
<sequence length="421" mass="47829">MDLEAKVKKMGLGHEQGFGAPCLKCKEKCEGFELHFWRKICRNCKCGQEEHDVLLSSEEDRKVGKLFEDTKYTTLIAKLKSDGIPMYKRNVMILTNPVPAKKNVSINTVTYEWAPPVQNQALARQYMQMLPKEKQPVAGSEGAQYRKKQLAKQLPEHDQDPSKCHELSPKEVKEMEQFVKKYKNEALGVGDVKLPSEMDAQAPNRICIPGGDRSTTAAVGAMEAKSGEHRRTQYSCYGCKLSMKEGDPAVYAERAGYNKLWHPACFICSTCCELLVDMIYFWKNGKLYCGRHYCDSEKPRCAGCDELIFSNEYTQAENQNWHLKHFCCFDCDNILAGEIYVMVNEKPVCKPCYVKNHAVVCQGCHNAIDPEVQRVTYNNFSWHASTECFLCSCCSKCLIGQKFMPVEGMVFCSVECKKMMS</sequence>
<gene>
    <name type="primary">TES</name>
</gene>
<evidence type="ECO:0000250" key="1"/>
<evidence type="ECO:0000255" key="2">
    <source>
        <dbReference type="PROSITE-ProRule" id="PRU00125"/>
    </source>
</evidence>
<evidence type="ECO:0000255" key="3">
    <source>
        <dbReference type="PROSITE-ProRule" id="PRU00636"/>
    </source>
</evidence>
<evidence type="ECO:0000256" key="4">
    <source>
        <dbReference type="SAM" id="MobiDB-lite"/>
    </source>
</evidence>
<evidence type="ECO:0000305" key="5"/>
<reference key="1">
    <citation type="submission" date="2006-09" db="EMBL/GenBank/DDBJ databases">
        <title>NISC comparative sequencing initiative.</title>
        <authorList>
            <person name="Antonellis A."/>
            <person name="Ayele K."/>
            <person name="Benjamin B."/>
            <person name="Blakesley R.W."/>
            <person name="Boakye A."/>
            <person name="Bouffard G.G."/>
            <person name="Brinkley C."/>
            <person name="Brooks S."/>
            <person name="Chu G."/>
            <person name="Coleman H."/>
            <person name="Engle J."/>
            <person name="Gestole M."/>
            <person name="Greene A."/>
            <person name="Guan X."/>
            <person name="Gupta J."/>
            <person name="Haghighi P."/>
            <person name="Han J."/>
            <person name="Hansen N."/>
            <person name="Ho S.-L."/>
            <person name="Hu P."/>
            <person name="Hunter G."/>
            <person name="Hurle B."/>
            <person name="Idol J.R."/>
            <person name="Kwong P."/>
            <person name="Laric P."/>
            <person name="Larson S."/>
            <person name="Lee-Lin S.-Q."/>
            <person name="Legaspi R."/>
            <person name="Madden M."/>
            <person name="Maduro Q.L."/>
            <person name="Maduro V.B."/>
            <person name="Margulies E.H."/>
            <person name="Masiello C."/>
            <person name="Maskeri B."/>
            <person name="McDowell J."/>
            <person name="Mojidi H.A."/>
            <person name="Mullikin J.C."/>
            <person name="Oestreicher J.S."/>
            <person name="Park M."/>
            <person name="Portnoy M.E."/>
            <person name="Prasad A."/>
            <person name="Puri O."/>
            <person name="Reddix-Dugue N."/>
            <person name="Schandler K."/>
            <person name="Schueler M.G."/>
            <person name="Sison C."/>
            <person name="Stantripop S."/>
            <person name="Stephen E."/>
            <person name="Taye A."/>
            <person name="Thomas J.W."/>
            <person name="Thomas P.J."/>
            <person name="Tsipouri V."/>
            <person name="Ung L."/>
            <person name="Vogt J.L."/>
            <person name="Wetherby K.D."/>
            <person name="Young A."/>
            <person name="Green E.D."/>
        </authorList>
    </citation>
    <scope>NUCLEOTIDE SEQUENCE [LARGE SCALE GENOMIC DNA]</scope>
</reference>
<dbReference type="EMBL" id="DP000181">
    <property type="protein sequence ID" value="ABI93625.1"/>
    <property type="molecule type" value="Genomic_DNA"/>
</dbReference>
<dbReference type="RefSeq" id="NP_001268691.1">
    <property type="nucleotide sequence ID" value="NM_001281762.2"/>
</dbReference>
<dbReference type="SMR" id="Q07E51"/>
<dbReference type="GeneID" id="101433926"/>
<dbReference type="KEGG" id="dnm:101433926"/>
<dbReference type="CTD" id="26136"/>
<dbReference type="HOGENOM" id="CLU_008937_1_1_1"/>
<dbReference type="OMA" id="PHMGPHS"/>
<dbReference type="OrthoDB" id="10069167at2759"/>
<dbReference type="GO" id="GO:0005737">
    <property type="term" value="C:cytoplasm"/>
    <property type="evidence" value="ECO:0000250"/>
    <property type="project" value="UniProtKB"/>
</dbReference>
<dbReference type="GO" id="GO:0005829">
    <property type="term" value="C:cytosol"/>
    <property type="evidence" value="ECO:0007669"/>
    <property type="project" value="Ensembl"/>
</dbReference>
<dbReference type="GO" id="GO:0005925">
    <property type="term" value="C:focal adhesion"/>
    <property type="evidence" value="ECO:0007669"/>
    <property type="project" value="UniProtKB-SubCell"/>
</dbReference>
<dbReference type="GO" id="GO:0005886">
    <property type="term" value="C:plasma membrane"/>
    <property type="evidence" value="ECO:0007669"/>
    <property type="project" value="Ensembl"/>
</dbReference>
<dbReference type="GO" id="GO:0032991">
    <property type="term" value="C:protein-containing complex"/>
    <property type="evidence" value="ECO:0007669"/>
    <property type="project" value="Ensembl"/>
</dbReference>
<dbReference type="GO" id="GO:0008270">
    <property type="term" value="F:zinc ion binding"/>
    <property type="evidence" value="ECO:0000250"/>
    <property type="project" value="UniProtKB"/>
</dbReference>
<dbReference type="GO" id="GO:0008285">
    <property type="term" value="P:negative regulation of cell population proliferation"/>
    <property type="evidence" value="ECO:0000250"/>
    <property type="project" value="UniProtKB"/>
</dbReference>
<dbReference type="CDD" id="cd09413">
    <property type="entry name" value="LIM1_Testin"/>
    <property type="match status" value="1"/>
</dbReference>
<dbReference type="CDD" id="cd09416">
    <property type="entry name" value="LIM2_Testin"/>
    <property type="match status" value="1"/>
</dbReference>
<dbReference type="CDD" id="cd09419">
    <property type="entry name" value="LIM3_Testin"/>
    <property type="match status" value="1"/>
</dbReference>
<dbReference type="CDD" id="cd09829">
    <property type="entry name" value="PET_testin"/>
    <property type="match status" value="1"/>
</dbReference>
<dbReference type="FunFam" id="2.10.110.10:FF:000061">
    <property type="entry name" value="Testin"/>
    <property type="match status" value="1"/>
</dbReference>
<dbReference type="FunFam" id="2.10.110.10:FF:000065">
    <property type="entry name" value="Testin"/>
    <property type="match status" value="1"/>
</dbReference>
<dbReference type="FunFam" id="2.10.110.10:FF:000005">
    <property type="entry name" value="Testin isoform 1"/>
    <property type="match status" value="1"/>
</dbReference>
<dbReference type="Gene3D" id="2.10.110.10">
    <property type="entry name" value="Cysteine Rich Protein"/>
    <property type="match status" value="3"/>
</dbReference>
<dbReference type="InterPro" id="IPR034958">
    <property type="entry name" value="LIM1_Testin"/>
</dbReference>
<dbReference type="InterPro" id="IPR034959">
    <property type="entry name" value="LIM2_Testin"/>
</dbReference>
<dbReference type="InterPro" id="IPR034960">
    <property type="entry name" value="LIM3_Testin"/>
</dbReference>
<dbReference type="InterPro" id="IPR010442">
    <property type="entry name" value="PET_domain"/>
</dbReference>
<dbReference type="InterPro" id="IPR033724">
    <property type="entry name" value="PET_testin"/>
</dbReference>
<dbReference type="InterPro" id="IPR047120">
    <property type="entry name" value="Pk/Esn/Tes"/>
</dbReference>
<dbReference type="InterPro" id="IPR001781">
    <property type="entry name" value="Znf_LIM"/>
</dbReference>
<dbReference type="PANTHER" id="PTHR24211">
    <property type="entry name" value="LIM DOMAIN-CONTAINING PROTEIN"/>
    <property type="match status" value="1"/>
</dbReference>
<dbReference type="PANTHER" id="PTHR24211:SF1">
    <property type="entry name" value="TESTIN"/>
    <property type="match status" value="1"/>
</dbReference>
<dbReference type="Pfam" id="PF00412">
    <property type="entry name" value="LIM"/>
    <property type="match status" value="3"/>
</dbReference>
<dbReference type="Pfam" id="PF06297">
    <property type="entry name" value="PET"/>
    <property type="match status" value="1"/>
</dbReference>
<dbReference type="SMART" id="SM00132">
    <property type="entry name" value="LIM"/>
    <property type="match status" value="3"/>
</dbReference>
<dbReference type="SUPFAM" id="SSF57716">
    <property type="entry name" value="Glucocorticoid receptor-like (DNA-binding domain)"/>
    <property type="match status" value="2"/>
</dbReference>
<dbReference type="PROSITE" id="PS00478">
    <property type="entry name" value="LIM_DOMAIN_1"/>
    <property type="match status" value="2"/>
</dbReference>
<dbReference type="PROSITE" id="PS50023">
    <property type="entry name" value="LIM_DOMAIN_2"/>
    <property type="match status" value="3"/>
</dbReference>
<dbReference type="PROSITE" id="PS51303">
    <property type="entry name" value="PET"/>
    <property type="match status" value="1"/>
</dbReference>
<name>TES_DASNO</name>
<keyword id="KW-0965">Cell junction</keyword>
<keyword id="KW-0963">Cytoplasm</keyword>
<keyword id="KW-0440">LIM domain</keyword>
<keyword id="KW-0479">Metal-binding</keyword>
<keyword id="KW-0677">Repeat</keyword>
<keyword id="KW-0862">Zinc</keyword>
<accession>Q07E51</accession>
<feature type="chain" id="PRO_0000260329" description="Testin">
    <location>
        <begin position="1"/>
        <end position="421"/>
    </location>
</feature>
<feature type="domain" description="PET" evidence="3">
    <location>
        <begin position="92"/>
        <end position="199"/>
    </location>
</feature>
<feature type="domain" description="LIM zinc-binding 1" evidence="2">
    <location>
        <begin position="234"/>
        <end position="297"/>
    </location>
</feature>
<feature type="domain" description="LIM zinc-binding 2" evidence="2">
    <location>
        <begin position="299"/>
        <end position="359"/>
    </location>
</feature>
<feature type="domain" description="LIM zinc-binding 3" evidence="2">
    <location>
        <begin position="362"/>
        <end position="421"/>
    </location>
</feature>
<feature type="region of interest" description="Disordered" evidence="4">
    <location>
        <begin position="135"/>
        <end position="165"/>
    </location>
</feature>
<feature type="compositionally biased region" description="Basic and acidic residues" evidence="4">
    <location>
        <begin position="154"/>
        <end position="165"/>
    </location>
</feature>
<proteinExistence type="inferred from homology"/>
<organism>
    <name type="scientific">Dasypus novemcinctus</name>
    <name type="common">Nine-banded armadillo</name>
    <dbReference type="NCBI Taxonomy" id="9361"/>
    <lineage>
        <taxon>Eukaryota</taxon>
        <taxon>Metazoa</taxon>
        <taxon>Chordata</taxon>
        <taxon>Craniata</taxon>
        <taxon>Vertebrata</taxon>
        <taxon>Euteleostomi</taxon>
        <taxon>Mammalia</taxon>
        <taxon>Eutheria</taxon>
        <taxon>Xenarthra</taxon>
        <taxon>Cingulata</taxon>
        <taxon>Dasypodidae</taxon>
        <taxon>Dasypus</taxon>
    </lineage>
</organism>
<comment type="function">
    <text evidence="1">Scaffold protein that may play a role in cell adhesion, cell spreading and in the reorganization of the actin cytoskeleton. Plays a role in the regulation of cell proliferation. May act as a tumor suppressor (By similarity).</text>
</comment>
<comment type="subunit">
    <text evidence="1">Interacts via LIM domain 1 with ZYX. Interacts (via LIM domain 3) with ENAH and VASP. Interacts with ALKBH4, talin, actin, alpha-actinin, GRIP1 and PXN (By similarity). Interacts (via LIM domain 2) with ACTL7A (via N-terminus). Heterodimer with ACTL7A; the heterodimer interacts with ENAH to form a heterotrimer (By similarity).</text>
</comment>
<comment type="subcellular location">
    <subcellularLocation>
        <location evidence="1">Cytoplasm</location>
    </subcellularLocation>
    <subcellularLocation>
        <location evidence="1">Cell junction</location>
        <location evidence="1">Focal adhesion</location>
    </subcellularLocation>
    <text evidence="1">Detected along actin stress fibers.</text>
</comment>
<comment type="domain">
    <text evidence="1">The N-terminal and the C-terminal halves of the protein can associate with each other, thereby hindering interactions with ZYX.</text>
</comment>
<comment type="similarity">
    <text evidence="5">Belongs to the prickle / espinas / testin family.</text>
</comment>